<feature type="chain" id="PRO_0000157046" description="Thiamine-phosphate synthase">
    <location>
        <begin position="1"/>
        <end position="213"/>
    </location>
</feature>
<feature type="binding site" evidence="1">
    <location>
        <begin position="40"/>
        <end position="44"/>
    </location>
    <ligand>
        <name>4-amino-2-methyl-5-(diphosphooxymethyl)pyrimidine</name>
        <dbReference type="ChEBI" id="CHEBI:57841"/>
    </ligand>
</feature>
<feature type="binding site" evidence="1">
    <location>
        <position position="75"/>
    </location>
    <ligand>
        <name>4-amino-2-methyl-5-(diphosphooxymethyl)pyrimidine</name>
        <dbReference type="ChEBI" id="CHEBI:57841"/>
    </ligand>
</feature>
<feature type="binding site" evidence="1">
    <location>
        <position position="76"/>
    </location>
    <ligand>
        <name>Mg(2+)</name>
        <dbReference type="ChEBI" id="CHEBI:18420"/>
    </ligand>
</feature>
<feature type="binding site" evidence="1">
    <location>
        <position position="95"/>
    </location>
    <ligand>
        <name>Mg(2+)</name>
        <dbReference type="ChEBI" id="CHEBI:18420"/>
    </ligand>
</feature>
<feature type="binding site" evidence="1">
    <location>
        <position position="113"/>
    </location>
    <ligand>
        <name>4-amino-2-methyl-5-(diphosphooxymethyl)pyrimidine</name>
        <dbReference type="ChEBI" id="CHEBI:57841"/>
    </ligand>
</feature>
<feature type="binding site" evidence="1">
    <location>
        <begin position="139"/>
        <end position="141"/>
    </location>
    <ligand>
        <name>2-[(2R,5Z)-2-carboxy-4-methylthiazol-5(2H)-ylidene]ethyl phosphate</name>
        <dbReference type="ChEBI" id="CHEBI:62899"/>
    </ligand>
</feature>
<feature type="binding site" evidence="1">
    <location>
        <position position="142"/>
    </location>
    <ligand>
        <name>4-amino-2-methyl-5-(diphosphooxymethyl)pyrimidine</name>
        <dbReference type="ChEBI" id="CHEBI:57841"/>
    </ligand>
</feature>
<feature type="binding site" evidence="1">
    <location>
        <position position="171"/>
    </location>
    <ligand>
        <name>2-[(2R,5Z)-2-carboxy-4-methylthiazol-5(2H)-ylidene]ethyl phosphate</name>
        <dbReference type="ChEBI" id="CHEBI:62899"/>
    </ligand>
</feature>
<feature type="binding site" evidence="1">
    <location>
        <begin position="191"/>
        <end position="192"/>
    </location>
    <ligand>
        <name>2-[(2R,5Z)-2-carboxy-4-methylthiazol-5(2H)-ylidene]ethyl phosphate</name>
        <dbReference type="ChEBI" id="CHEBI:62899"/>
    </ligand>
</feature>
<reference key="1">
    <citation type="journal article" date="2004" name="Proc. Natl. Acad. Sci. U.S.A.">
        <title>Complete genomes of two clinical Staphylococcus aureus strains: evidence for the rapid evolution of virulence and drug resistance.</title>
        <authorList>
            <person name="Holden M.T.G."/>
            <person name="Feil E.J."/>
            <person name="Lindsay J.A."/>
            <person name="Peacock S.J."/>
            <person name="Day N.P.J."/>
            <person name="Enright M.C."/>
            <person name="Foster T.J."/>
            <person name="Moore C.E."/>
            <person name="Hurst L."/>
            <person name="Atkin R."/>
            <person name="Barron A."/>
            <person name="Bason N."/>
            <person name="Bentley S.D."/>
            <person name="Chillingworth C."/>
            <person name="Chillingworth T."/>
            <person name="Churcher C."/>
            <person name="Clark L."/>
            <person name="Corton C."/>
            <person name="Cronin A."/>
            <person name="Doggett J."/>
            <person name="Dowd L."/>
            <person name="Feltwell T."/>
            <person name="Hance Z."/>
            <person name="Harris B."/>
            <person name="Hauser H."/>
            <person name="Holroyd S."/>
            <person name="Jagels K."/>
            <person name="James K.D."/>
            <person name="Lennard N."/>
            <person name="Line A."/>
            <person name="Mayes R."/>
            <person name="Moule S."/>
            <person name="Mungall K."/>
            <person name="Ormond D."/>
            <person name="Quail M.A."/>
            <person name="Rabbinowitsch E."/>
            <person name="Rutherford K.M."/>
            <person name="Sanders M."/>
            <person name="Sharp S."/>
            <person name="Simmonds M."/>
            <person name="Stevens K."/>
            <person name="Whitehead S."/>
            <person name="Barrell B.G."/>
            <person name="Spratt B.G."/>
            <person name="Parkhill J."/>
        </authorList>
    </citation>
    <scope>NUCLEOTIDE SEQUENCE [LARGE SCALE GENOMIC DNA]</scope>
    <source>
        <strain>MSSA476</strain>
    </source>
</reference>
<proteinExistence type="inferred from homology"/>
<gene>
    <name evidence="1" type="primary">thiE</name>
    <name type="ordered locus">SAS1995</name>
</gene>
<dbReference type="EC" id="2.5.1.3" evidence="1"/>
<dbReference type="EMBL" id="BX571857">
    <property type="protein sequence ID" value="CAG43802.1"/>
    <property type="molecule type" value="Genomic_DNA"/>
</dbReference>
<dbReference type="RefSeq" id="WP_000483155.1">
    <property type="nucleotide sequence ID" value="NC_002953.3"/>
</dbReference>
<dbReference type="SMR" id="Q6G7L9"/>
<dbReference type="KEGG" id="sas:SAS1995"/>
<dbReference type="HOGENOM" id="CLU_018272_3_2_9"/>
<dbReference type="UniPathway" id="UPA00060">
    <property type="reaction ID" value="UER00141"/>
</dbReference>
<dbReference type="GO" id="GO:0005737">
    <property type="term" value="C:cytoplasm"/>
    <property type="evidence" value="ECO:0007669"/>
    <property type="project" value="TreeGrafter"/>
</dbReference>
<dbReference type="GO" id="GO:0000287">
    <property type="term" value="F:magnesium ion binding"/>
    <property type="evidence" value="ECO:0007669"/>
    <property type="project" value="UniProtKB-UniRule"/>
</dbReference>
<dbReference type="GO" id="GO:0004789">
    <property type="term" value="F:thiamine-phosphate diphosphorylase activity"/>
    <property type="evidence" value="ECO:0007669"/>
    <property type="project" value="UniProtKB-UniRule"/>
</dbReference>
<dbReference type="GO" id="GO:0009228">
    <property type="term" value="P:thiamine biosynthetic process"/>
    <property type="evidence" value="ECO:0007669"/>
    <property type="project" value="UniProtKB-KW"/>
</dbReference>
<dbReference type="GO" id="GO:0009229">
    <property type="term" value="P:thiamine diphosphate biosynthetic process"/>
    <property type="evidence" value="ECO:0007669"/>
    <property type="project" value="UniProtKB-UniRule"/>
</dbReference>
<dbReference type="CDD" id="cd00564">
    <property type="entry name" value="TMP_TenI"/>
    <property type="match status" value="1"/>
</dbReference>
<dbReference type="FunFam" id="3.20.20.70:FF:000096">
    <property type="entry name" value="Thiamine-phosphate synthase"/>
    <property type="match status" value="1"/>
</dbReference>
<dbReference type="Gene3D" id="3.20.20.70">
    <property type="entry name" value="Aldolase class I"/>
    <property type="match status" value="1"/>
</dbReference>
<dbReference type="HAMAP" id="MF_00097">
    <property type="entry name" value="TMP_synthase"/>
    <property type="match status" value="1"/>
</dbReference>
<dbReference type="InterPro" id="IPR013785">
    <property type="entry name" value="Aldolase_TIM"/>
</dbReference>
<dbReference type="InterPro" id="IPR036206">
    <property type="entry name" value="ThiamineP_synth_sf"/>
</dbReference>
<dbReference type="InterPro" id="IPR022998">
    <property type="entry name" value="ThiamineP_synth_TenI"/>
</dbReference>
<dbReference type="InterPro" id="IPR034291">
    <property type="entry name" value="TMP_synthase"/>
</dbReference>
<dbReference type="NCBIfam" id="TIGR00693">
    <property type="entry name" value="thiE"/>
    <property type="match status" value="1"/>
</dbReference>
<dbReference type="PANTHER" id="PTHR20857">
    <property type="entry name" value="THIAMINE-PHOSPHATE PYROPHOSPHORYLASE"/>
    <property type="match status" value="1"/>
</dbReference>
<dbReference type="PANTHER" id="PTHR20857:SF15">
    <property type="entry name" value="THIAMINE-PHOSPHATE SYNTHASE"/>
    <property type="match status" value="1"/>
</dbReference>
<dbReference type="Pfam" id="PF02581">
    <property type="entry name" value="TMP-TENI"/>
    <property type="match status" value="1"/>
</dbReference>
<dbReference type="SUPFAM" id="SSF51391">
    <property type="entry name" value="Thiamin phosphate synthase"/>
    <property type="match status" value="1"/>
</dbReference>
<name>THIE_STAAS</name>
<organism>
    <name type="scientific">Staphylococcus aureus (strain MSSA476)</name>
    <dbReference type="NCBI Taxonomy" id="282459"/>
    <lineage>
        <taxon>Bacteria</taxon>
        <taxon>Bacillati</taxon>
        <taxon>Bacillota</taxon>
        <taxon>Bacilli</taxon>
        <taxon>Bacillales</taxon>
        <taxon>Staphylococcaceae</taxon>
        <taxon>Staphylococcus</taxon>
    </lineage>
</organism>
<accession>Q6G7L9</accession>
<keyword id="KW-0460">Magnesium</keyword>
<keyword id="KW-0479">Metal-binding</keyword>
<keyword id="KW-0784">Thiamine biosynthesis</keyword>
<keyword id="KW-0808">Transferase</keyword>
<sequence>MFNQSYLNVYFICGTSDVPSHRTIHEVLEAALKAGITLFQFREKGESALKGNDKLVLAKELQHLCHQYDVPFIVNDDVSLAKEINADGIHVGQDDAKVKEIAQYFTDKIIGLSISDLDEYAKSDLTHVDYIGVGPIYPTPSKHDAHIPVGPEMIATFKEMNPQLPIVAIGGINTNNVAPIVEAGANGISVISAISKSENIENTVNRFKDFFNN</sequence>
<comment type="function">
    <text evidence="1">Condenses 4-methyl-5-(beta-hydroxyethyl)thiazole monophosphate (THZ-P) and 2-methyl-4-amino-5-hydroxymethyl pyrimidine pyrophosphate (HMP-PP) to form thiamine monophosphate (TMP).</text>
</comment>
<comment type="catalytic activity">
    <reaction evidence="1">
        <text>2-[(2R,5Z)-2-carboxy-4-methylthiazol-5(2H)-ylidene]ethyl phosphate + 4-amino-2-methyl-5-(diphosphooxymethyl)pyrimidine + 2 H(+) = thiamine phosphate + CO2 + diphosphate</text>
        <dbReference type="Rhea" id="RHEA:47844"/>
        <dbReference type="ChEBI" id="CHEBI:15378"/>
        <dbReference type="ChEBI" id="CHEBI:16526"/>
        <dbReference type="ChEBI" id="CHEBI:33019"/>
        <dbReference type="ChEBI" id="CHEBI:37575"/>
        <dbReference type="ChEBI" id="CHEBI:57841"/>
        <dbReference type="ChEBI" id="CHEBI:62899"/>
        <dbReference type="EC" id="2.5.1.3"/>
    </reaction>
</comment>
<comment type="catalytic activity">
    <reaction evidence="1">
        <text>2-(2-carboxy-4-methylthiazol-5-yl)ethyl phosphate + 4-amino-2-methyl-5-(diphosphooxymethyl)pyrimidine + 2 H(+) = thiamine phosphate + CO2 + diphosphate</text>
        <dbReference type="Rhea" id="RHEA:47848"/>
        <dbReference type="ChEBI" id="CHEBI:15378"/>
        <dbReference type="ChEBI" id="CHEBI:16526"/>
        <dbReference type="ChEBI" id="CHEBI:33019"/>
        <dbReference type="ChEBI" id="CHEBI:37575"/>
        <dbReference type="ChEBI" id="CHEBI:57841"/>
        <dbReference type="ChEBI" id="CHEBI:62890"/>
        <dbReference type="EC" id="2.5.1.3"/>
    </reaction>
</comment>
<comment type="catalytic activity">
    <reaction evidence="1">
        <text>4-methyl-5-(2-phosphooxyethyl)-thiazole + 4-amino-2-methyl-5-(diphosphooxymethyl)pyrimidine + H(+) = thiamine phosphate + diphosphate</text>
        <dbReference type="Rhea" id="RHEA:22328"/>
        <dbReference type="ChEBI" id="CHEBI:15378"/>
        <dbReference type="ChEBI" id="CHEBI:33019"/>
        <dbReference type="ChEBI" id="CHEBI:37575"/>
        <dbReference type="ChEBI" id="CHEBI:57841"/>
        <dbReference type="ChEBI" id="CHEBI:58296"/>
        <dbReference type="EC" id="2.5.1.3"/>
    </reaction>
</comment>
<comment type="cofactor">
    <cofactor evidence="1">
        <name>Mg(2+)</name>
        <dbReference type="ChEBI" id="CHEBI:18420"/>
    </cofactor>
    <text evidence="1">Binds 1 Mg(2+) ion per subunit.</text>
</comment>
<comment type="pathway">
    <text evidence="1">Cofactor biosynthesis; thiamine diphosphate biosynthesis; thiamine phosphate from 4-amino-2-methyl-5-diphosphomethylpyrimidine and 4-methyl-5-(2-phosphoethyl)-thiazole: step 1/1.</text>
</comment>
<comment type="similarity">
    <text evidence="1">Belongs to the thiamine-phosphate synthase family.</text>
</comment>
<evidence type="ECO:0000255" key="1">
    <source>
        <dbReference type="HAMAP-Rule" id="MF_00097"/>
    </source>
</evidence>
<protein>
    <recommendedName>
        <fullName evidence="1">Thiamine-phosphate synthase</fullName>
        <shortName evidence="1">TP synthase</shortName>
        <shortName evidence="1">TPS</shortName>
        <ecNumber evidence="1">2.5.1.3</ecNumber>
    </recommendedName>
    <alternativeName>
        <fullName evidence="1">Thiamine-phosphate pyrophosphorylase</fullName>
        <shortName evidence="1">TMP pyrophosphorylase</shortName>
        <shortName evidence="1">TMP-PPase</shortName>
    </alternativeName>
</protein>